<dbReference type="EC" id="2.1.1.-"/>
<dbReference type="EMBL" id="AL606668">
    <property type="protein sequence ID" value="CAE05760.2"/>
    <property type="molecule type" value="Genomic_DNA"/>
</dbReference>
<dbReference type="EMBL" id="AP014960">
    <property type="status" value="NOT_ANNOTATED_CDS"/>
    <property type="molecule type" value="Genomic_DNA"/>
</dbReference>
<dbReference type="EMBL" id="CM000141">
    <property type="protein sequence ID" value="EAZ32411.1"/>
    <property type="status" value="ALT_SEQ"/>
    <property type="molecule type" value="Genomic_DNA"/>
</dbReference>
<dbReference type="SMR" id="Q7XKC0"/>
<dbReference type="FunCoup" id="Q7XKC0">
    <property type="interactions" value="235"/>
</dbReference>
<dbReference type="STRING" id="39947.Q7XKC0"/>
<dbReference type="PaxDb" id="39947-Q7XKC0"/>
<dbReference type="EnsemblPlants" id="Os04t0677066-01">
    <property type="protein sequence ID" value="Os04t0677066-01"/>
    <property type="gene ID" value="Os04g0677066"/>
</dbReference>
<dbReference type="GeneID" id="9268644"/>
<dbReference type="Gramene" id="Os04t0677066-01">
    <property type="protein sequence ID" value="Os04t0677066-01"/>
    <property type="gene ID" value="Os04g0677066"/>
</dbReference>
<dbReference type="KEGG" id="osa:9268644"/>
<dbReference type="eggNOG" id="KOG1499">
    <property type="taxonomic scope" value="Eukaryota"/>
</dbReference>
<dbReference type="HOGENOM" id="CLU_017375_1_2_1"/>
<dbReference type="InParanoid" id="Q7XKC0"/>
<dbReference type="OrthoDB" id="7848332at2759"/>
<dbReference type="Proteomes" id="UP000000763">
    <property type="component" value="Chromosome 4"/>
</dbReference>
<dbReference type="Proteomes" id="UP000007752">
    <property type="component" value="Chromosome 4"/>
</dbReference>
<dbReference type="Proteomes" id="UP000059680">
    <property type="component" value="Chromosome 4"/>
</dbReference>
<dbReference type="GO" id="GO:0042054">
    <property type="term" value="F:histone methyltransferase activity"/>
    <property type="evidence" value="ECO:0000318"/>
    <property type="project" value="GO_Central"/>
</dbReference>
<dbReference type="GO" id="GO:0016274">
    <property type="term" value="F:protein-arginine N-methyltransferase activity"/>
    <property type="evidence" value="ECO:0000318"/>
    <property type="project" value="GO_Central"/>
</dbReference>
<dbReference type="GO" id="GO:0006338">
    <property type="term" value="P:chromatin remodeling"/>
    <property type="evidence" value="ECO:0000318"/>
    <property type="project" value="GO_Central"/>
</dbReference>
<dbReference type="GO" id="GO:0032259">
    <property type="term" value="P:methylation"/>
    <property type="evidence" value="ECO:0007669"/>
    <property type="project" value="UniProtKB-KW"/>
</dbReference>
<dbReference type="GO" id="GO:0006355">
    <property type="term" value="P:regulation of DNA-templated transcription"/>
    <property type="evidence" value="ECO:0000318"/>
    <property type="project" value="GO_Central"/>
</dbReference>
<dbReference type="CDD" id="cd02440">
    <property type="entry name" value="AdoMet_MTases"/>
    <property type="match status" value="1"/>
</dbReference>
<dbReference type="FunFam" id="2.70.160.11:FF:000008">
    <property type="entry name" value="Protein arginine N-methyltransferase 6"/>
    <property type="match status" value="1"/>
</dbReference>
<dbReference type="FunFam" id="3.40.50.150:FF:000016">
    <property type="entry name" value="Protein arginine N-methyltransferase 6"/>
    <property type="match status" value="1"/>
</dbReference>
<dbReference type="Gene3D" id="2.70.160.11">
    <property type="entry name" value="Hnrnp arginine n-methyltransferase1"/>
    <property type="match status" value="1"/>
</dbReference>
<dbReference type="Gene3D" id="3.40.50.150">
    <property type="entry name" value="Vaccinia Virus protein VP39"/>
    <property type="match status" value="1"/>
</dbReference>
<dbReference type="InterPro" id="IPR025799">
    <property type="entry name" value="Arg_MeTrfase"/>
</dbReference>
<dbReference type="InterPro" id="IPR041698">
    <property type="entry name" value="Methyltransf_25"/>
</dbReference>
<dbReference type="InterPro" id="IPR055135">
    <property type="entry name" value="PRMT_dom"/>
</dbReference>
<dbReference type="InterPro" id="IPR029063">
    <property type="entry name" value="SAM-dependent_MTases_sf"/>
</dbReference>
<dbReference type="PANTHER" id="PTHR11006">
    <property type="entry name" value="PROTEIN ARGININE N-METHYLTRANSFERASE"/>
    <property type="match status" value="1"/>
</dbReference>
<dbReference type="PANTHER" id="PTHR11006:SF70">
    <property type="entry name" value="PROTEIN ARGININE N-METHYLTRANSFERASE 6.1-RELATED"/>
    <property type="match status" value="1"/>
</dbReference>
<dbReference type="Pfam" id="PF13649">
    <property type="entry name" value="Methyltransf_25"/>
    <property type="match status" value="1"/>
</dbReference>
<dbReference type="Pfam" id="PF22528">
    <property type="entry name" value="PRMT_C"/>
    <property type="match status" value="2"/>
</dbReference>
<dbReference type="SUPFAM" id="SSF53335">
    <property type="entry name" value="S-adenosyl-L-methionine-dependent methyltransferases"/>
    <property type="match status" value="1"/>
</dbReference>
<dbReference type="PROSITE" id="PS51678">
    <property type="entry name" value="SAM_MT_PRMT"/>
    <property type="match status" value="1"/>
</dbReference>
<accession>Q7XKC0</accession>
<accession>A3AYM2</accession>
<sequence length="391" mass="43519">MLPSHLNGHSPLARRCPRLSAASPPATGDSDAAAAAADAPLAEHDRIYFQSYSHIGIHEAMIKDRVRTDAYRSAIMHHQKFIEGKVVMDVGCGTGILSVFCARAGAKCVYAVEASEMATQAREIVKANNLDDKVVVVHGRVEDVEVEDKVDVIISEWMGYMLLYESMLPSVLFARDKWLKPGGLILPSHATLFMAPITNSERYEGSVDFWSDVYGINMSALVPLAKKFTSEEPSIEIIGGENVLSWPFVVKHIDCYTFKAEELKSFTTKYKVSSMMLAPIHGFGLWFEVEFNGPSNPTDKSPSDLNPLDVIRKKRRRGSEDPVVLSTAPEDEPTHWHQTILYFPDPIEVKQDQIIEGSVKVSQSEENPRFLNIQLDCTTGGQTLVKDYAMR</sequence>
<keyword id="KW-0489">Methyltransferase</keyword>
<keyword id="KW-1185">Reference proteome</keyword>
<keyword id="KW-0949">S-adenosyl-L-methionine</keyword>
<keyword id="KW-0808">Transferase</keyword>
<feature type="chain" id="PRO_0000293998" description="Probable protein arginine N-methyltransferase 6.1">
    <location>
        <begin position="1"/>
        <end position="391"/>
    </location>
</feature>
<feature type="domain" description="SAM-dependent MTase PRMT-type" evidence="2">
    <location>
        <begin position="45"/>
        <end position="391"/>
    </location>
</feature>
<feature type="region of interest" description="Disordered" evidence="3">
    <location>
        <begin position="1"/>
        <end position="35"/>
    </location>
</feature>
<feature type="compositionally biased region" description="Low complexity" evidence="3">
    <location>
        <begin position="20"/>
        <end position="35"/>
    </location>
</feature>
<feature type="active site" evidence="1">
    <location>
        <position position="156"/>
    </location>
</feature>
<feature type="active site" evidence="1">
    <location>
        <position position="165"/>
    </location>
</feature>
<feature type="binding site" evidence="1">
    <location>
        <position position="58"/>
    </location>
    <ligand>
        <name>S-adenosyl-L-methionine</name>
        <dbReference type="ChEBI" id="CHEBI:59789"/>
    </ligand>
</feature>
<feature type="binding site" evidence="1">
    <location>
        <position position="67"/>
    </location>
    <ligand>
        <name>S-adenosyl-L-methionine</name>
        <dbReference type="ChEBI" id="CHEBI:59789"/>
    </ligand>
</feature>
<feature type="binding site" evidence="1">
    <location>
        <position position="91"/>
    </location>
    <ligand>
        <name>S-adenosyl-L-methionine</name>
        <dbReference type="ChEBI" id="CHEBI:59789"/>
    </ligand>
</feature>
<feature type="binding site" evidence="1">
    <location>
        <position position="113"/>
    </location>
    <ligand>
        <name>S-adenosyl-L-methionine</name>
        <dbReference type="ChEBI" id="CHEBI:59789"/>
    </ligand>
</feature>
<feature type="binding site" evidence="1">
    <location>
        <position position="142"/>
    </location>
    <ligand>
        <name>S-adenosyl-L-methionine</name>
        <dbReference type="ChEBI" id="CHEBI:59789"/>
    </ligand>
</feature>
<protein>
    <recommendedName>
        <fullName>Probable protein arginine N-methyltransferase 6.1</fullName>
        <ecNumber>2.1.1.-</ecNumber>
    </recommendedName>
</protein>
<comment type="function">
    <text evidence="1">Arginine methyltransferase that can both catalyze the formation of omega-N monomethylarginine (MMA) and asymmetrical dimethylarginine (aDMA).</text>
</comment>
<comment type="similarity">
    <text evidence="2">Belongs to the class I-like SAM-binding methyltransferase superfamily. Protein arginine N-methyltransferase family. PRMT6 subfamily.</text>
</comment>
<comment type="sequence caution" evidence="4">
    <conflict type="erroneous gene model prediction">
        <sequence resource="EMBL-CDS" id="EAZ32411"/>
    </conflict>
</comment>
<evidence type="ECO:0000250" key="1"/>
<evidence type="ECO:0000255" key="2">
    <source>
        <dbReference type="PROSITE-ProRule" id="PRU01015"/>
    </source>
</evidence>
<evidence type="ECO:0000256" key="3">
    <source>
        <dbReference type="SAM" id="MobiDB-lite"/>
    </source>
</evidence>
<evidence type="ECO:0000305" key="4"/>
<name>ANM61_ORYSJ</name>
<reference key="1">
    <citation type="journal article" date="2002" name="Nature">
        <title>Sequence and analysis of rice chromosome 4.</title>
        <authorList>
            <person name="Feng Q."/>
            <person name="Zhang Y."/>
            <person name="Hao P."/>
            <person name="Wang S."/>
            <person name="Fu G."/>
            <person name="Huang Y."/>
            <person name="Li Y."/>
            <person name="Zhu J."/>
            <person name="Liu Y."/>
            <person name="Hu X."/>
            <person name="Jia P."/>
            <person name="Zhang Y."/>
            <person name="Zhao Q."/>
            <person name="Ying K."/>
            <person name="Yu S."/>
            <person name="Tang Y."/>
            <person name="Weng Q."/>
            <person name="Zhang L."/>
            <person name="Lu Y."/>
            <person name="Mu J."/>
            <person name="Lu Y."/>
            <person name="Zhang L.S."/>
            <person name="Yu Z."/>
            <person name="Fan D."/>
            <person name="Liu X."/>
            <person name="Lu T."/>
            <person name="Li C."/>
            <person name="Wu Y."/>
            <person name="Sun T."/>
            <person name="Lei H."/>
            <person name="Li T."/>
            <person name="Hu H."/>
            <person name="Guan J."/>
            <person name="Wu M."/>
            <person name="Zhang R."/>
            <person name="Zhou B."/>
            <person name="Chen Z."/>
            <person name="Chen L."/>
            <person name="Jin Z."/>
            <person name="Wang R."/>
            <person name="Yin H."/>
            <person name="Cai Z."/>
            <person name="Ren S."/>
            <person name="Lv G."/>
            <person name="Gu W."/>
            <person name="Zhu G."/>
            <person name="Tu Y."/>
            <person name="Jia J."/>
            <person name="Zhang Y."/>
            <person name="Chen J."/>
            <person name="Kang H."/>
            <person name="Chen X."/>
            <person name="Shao C."/>
            <person name="Sun Y."/>
            <person name="Hu Q."/>
            <person name="Zhang X."/>
            <person name="Zhang W."/>
            <person name="Wang L."/>
            <person name="Ding C."/>
            <person name="Sheng H."/>
            <person name="Gu J."/>
            <person name="Chen S."/>
            <person name="Ni L."/>
            <person name="Zhu F."/>
            <person name="Chen W."/>
            <person name="Lan L."/>
            <person name="Lai Y."/>
            <person name="Cheng Z."/>
            <person name="Gu M."/>
            <person name="Jiang J."/>
            <person name="Li J."/>
            <person name="Hong G."/>
            <person name="Xue Y."/>
            <person name="Han B."/>
        </authorList>
    </citation>
    <scope>NUCLEOTIDE SEQUENCE [LARGE SCALE GENOMIC DNA]</scope>
    <source>
        <strain>cv. Nipponbare</strain>
    </source>
</reference>
<reference key="2">
    <citation type="journal article" date="2005" name="Nature">
        <title>The map-based sequence of the rice genome.</title>
        <authorList>
            <consortium name="International rice genome sequencing project (IRGSP)"/>
        </authorList>
    </citation>
    <scope>NUCLEOTIDE SEQUENCE [LARGE SCALE GENOMIC DNA]</scope>
    <source>
        <strain>cv. Nipponbare</strain>
    </source>
</reference>
<reference key="3">
    <citation type="journal article" date="2013" name="Rice">
        <title>Improvement of the Oryza sativa Nipponbare reference genome using next generation sequence and optical map data.</title>
        <authorList>
            <person name="Kawahara Y."/>
            <person name="de la Bastide M."/>
            <person name="Hamilton J.P."/>
            <person name="Kanamori H."/>
            <person name="McCombie W.R."/>
            <person name="Ouyang S."/>
            <person name="Schwartz D.C."/>
            <person name="Tanaka T."/>
            <person name="Wu J."/>
            <person name="Zhou S."/>
            <person name="Childs K.L."/>
            <person name="Davidson R.M."/>
            <person name="Lin H."/>
            <person name="Quesada-Ocampo L."/>
            <person name="Vaillancourt B."/>
            <person name="Sakai H."/>
            <person name="Lee S.S."/>
            <person name="Kim J."/>
            <person name="Numa H."/>
            <person name="Itoh T."/>
            <person name="Buell C.R."/>
            <person name="Matsumoto T."/>
        </authorList>
    </citation>
    <scope>GENOME REANNOTATION</scope>
    <source>
        <strain>cv. Nipponbare</strain>
    </source>
</reference>
<reference key="4">
    <citation type="journal article" date="2005" name="PLoS Biol.">
        <title>The genomes of Oryza sativa: a history of duplications.</title>
        <authorList>
            <person name="Yu J."/>
            <person name="Wang J."/>
            <person name="Lin W."/>
            <person name="Li S."/>
            <person name="Li H."/>
            <person name="Zhou J."/>
            <person name="Ni P."/>
            <person name="Dong W."/>
            <person name="Hu S."/>
            <person name="Zeng C."/>
            <person name="Zhang J."/>
            <person name="Zhang Y."/>
            <person name="Li R."/>
            <person name="Xu Z."/>
            <person name="Li S."/>
            <person name="Li X."/>
            <person name="Zheng H."/>
            <person name="Cong L."/>
            <person name="Lin L."/>
            <person name="Yin J."/>
            <person name="Geng J."/>
            <person name="Li G."/>
            <person name="Shi J."/>
            <person name="Liu J."/>
            <person name="Lv H."/>
            <person name="Li J."/>
            <person name="Wang J."/>
            <person name="Deng Y."/>
            <person name="Ran L."/>
            <person name="Shi X."/>
            <person name="Wang X."/>
            <person name="Wu Q."/>
            <person name="Li C."/>
            <person name="Ren X."/>
            <person name="Wang J."/>
            <person name="Wang X."/>
            <person name="Li D."/>
            <person name="Liu D."/>
            <person name="Zhang X."/>
            <person name="Ji Z."/>
            <person name="Zhao W."/>
            <person name="Sun Y."/>
            <person name="Zhang Z."/>
            <person name="Bao J."/>
            <person name="Han Y."/>
            <person name="Dong L."/>
            <person name="Ji J."/>
            <person name="Chen P."/>
            <person name="Wu S."/>
            <person name="Liu J."/>
            <person name="Xiao Y."/>
            <person name="Bu D."/>
            <person name="Tan J."/>
            <person name="Yang L."/>
            <person name="Ye C."/>
            <person name="Zhang J."/>
            <person name="Xu J."/>
            <person name="Zhou Y."/>
            <person name="Yu Y."/>
            <person name="Zhang B."/>
            <person name="Zhuang S."/>
            <person name="Wei H."/>
            <person name="Liu B."/>
            <person name="Lei M."/>
            <person name="Yu H."/>
            <person name="Li Y."/>
            <person name="Xu H."/>
            <person name="Wei S."/>
            <person name="He X."/>
            <person name="Fang L."/>
            <person name="Zhang Z."/>
            <person name="Zhang Y."/>
            <person name="Huang X."/>
            <person name="Su Z."/>
            <person name="Tong W."/>
            <person name="Li J."/>
            <person name="Tong Z."/>
            <person name="Li S."/>
            <person name="Ye J."/>
            <person name="Wang L."/>
            <person name="Fang L."/>
            <person name="Lei T."/>
            <person name="Chen C.-S."/>
            <person name="Chen H.-C."/>
            <person name="Xu Z."/>
            <person name="Li H."/>
            <person name="Huang H."/>
            <person name="Zhang F."/>
            <person name="Xu H."/>
            <person name="Li N."/>
            <person name="Zhao C."/>
            <person name="Li S."/>
            <person name="Dong L."/>
            <person name="Huang Y."/>
            <person name="Li L."/>
            <person name="Xi Y."/>
            <person name="Qi Q."/>
            <person name="Li W."/>
            <person name="Zhang B."/>
            <person name="Hu W."/>
            <person name="Zhang Y."/>
            <person name="Tian X."/>
            <person name="Jiao Y."/>
            <person name="Liang X."/>
            <person name="Jin J."/>
            <person name="Gao L."/>
            <person name="Zheng W."/>
            <person name="Hao B."/>
            <person name="Liu S.-M."/>
            <person name="Wang W."/>
            <person name="Yuan L."/>
            <person name="Cao M."/>
            <person name="McDermott J."/>
            <person name="Samudrala R."/>
            <person name="Wang J."/>
            <person name="Wong G.K.-S."/>
            <person name="Yang H."/>
        </authorList>
    </citation>
    <scope>NUCLEOTIDE SEQUENCE [LARGE SCALE GENOMIC DNA]</scope>
    <source>
        <strain>cv. Nipponbare</strain>
    </source>
</reference>
<gene>
    <name type="primary">PRMT6.1</name>
    <name type="ordered locus">Os04g0677066</name>
    <name type="ordered locus">LOC_Os04g58060</name>
    <name type="ORF">OsJ_015894</name>
    <name type="ORF">OSJNBa0064G10.11</name>
</gene>
<organism>
    <name type="scientific">Oryza sativa subsp. japonica</name>
    <name type="common">Rice</name>
    <dbReference type="NCBI Taxonomy" id="39947"/>
    <lineage>
        <taxon>Eukaryota</taxon>
        <taxon>Viridiplantae</taxon>
        <taxon>Streptophyta</taxon>
        <taxon>Embryophyta</taxon>
        <taxon>Tracheophyta</taxon>
        <taxon>Spermatophyta</taxon>
        <taxon>Magnoliopsida</taxon>
        <taxon>Liliopsida</taxon>
        <taxon>Poales</taxon>
        <taxon>Poaceae</taxon>
        <taxon>BOP clade</taxon>
        <taxon>Oryzoideae</taxon>
        <taxon>Oryzeae</taxon>
        <taxon>Oryzinae</taxon>
        <taxon>Oryza</taxon>
        <taxon>Oryza sativa</taxon>
    </lineage>
</organism>
<proteinExistence type="inferred from homology"/>